<dbReference type="EMBL" id="EF121983">
    <property type="protein sequence ID" value="ABL63422.1"/>
    <property type="molecule type" value="mRNA"/>
</dbReference>
<dbReference type="EMBL" id="EF121984">
    <property type="protein sequence ID" value="ABL63423.1"/>
    <property type="molecule type" value="mRNA"/>
</dbReference>
<dbReference type="EMBL" id="BC079084">
    <property type="protein sequence ID" value="AAH79084.1"/>
    <property type="molecule type" value="mRNA"/>
</dbReference>
<dbReference type="RefSeq" id="NP_001012141.1">
    <property type="nucleotide sequence ID" value="NM_001012141.1"/>
</dbReference>
<dbReference type="RefSeq" id="XP_038942290.1">
    <property type="nucleotide sequence ID" value="XM_039086362.2"/>
</dbReference>
<dbReference type="BMRB" id="Q6AYE3"/>
<dbReference type="SMR" id="Q6AYE3"/>
<dbReference type="FunCoup" id="Q6AYE3">
    <property type="interactions" value="437"/>
</dbReference>
<dbReference type="STRING" id="10116.ENSRNOP00000003699"/>
<dbReference type="iPTMnet" id="Q6AYE3"/>
<dbReference type="PhosphoSitePlus" id="Q6AYE3"/>
<dbReference type="PaxDb" id="10116-ENSRNOP00000003699"/>
<dbReference type="GeneID" id="360581"/>
<dbReference type="KEGG" id="rno:360581"/>
<dbReference type="AGR" id="RGD:1309959"/>
<dbReference type="CTD" id="6871"/>
<dbReference type="RGD" id="1309959">
    <property type="gene designation" value="Tada2a"/>
</dbReference>
<dbReference type="VEuPathDB" id="HostDB:ENSRNOG00000002757"/>
<dbReference type="eggNOG" id="KOG0457">
    <property type="taxonomic scope" value="Eukaryota"/>
</dbReference>
<dbReference type="HOGENOM" id="CLU_018273_2_1_1"/>
<dbReference type="InParanoid" id="Q6AYE3"/>
<dbReference type="OrthoDB" id="270417at2759"/>
<dbReference type="PhylomeDB" id="Q6AYE3"/>
<dbReference type="TreeFam" id="TF313975"/>
<dbReference type="Reactome" id="R-RNO-9772755">
    <property type="pathway name" value="Formation of WDR5-containing histone-modifying complexes"/>
</dbReference>
<dbReference type="PRO" id="PR:Q6AYE3"/>
<dbReference type="Proteomes" id="UP000002494">
    <property type="component" value="Chromosome 10"/>
</dbReference>
<dbReference type="Bgee" id="ENSRNOG00000002757">
    <property type="expression patterns" value="Expressed in pancreas and 20 other cell types or tissues"/>
</dbReference>
<dbReference type="ExpressionAtlas" id="Q6AYE3">
    <property type="expression patterns" value="baseline and differential"/>
</dbReference>
<dbReference type="GO" id="GO:0140672">
    <property type="term" value="C:ATAC complex"/>
    <property type="evidence" value="ECO:0000266"/>
    <property type="project" value="RGD"/>
</dbReference>
<dbReference type="GO" id="GO:0072686">
    <property type="term" value="C:mitotic spindle"/>
    <property type="evidence" value="ECO:0000266"/>
    <property type="project" value="RGD"/>
</dbReference>
<dbReference type="GO" id="GO:0005634">
    <property type="term" value="C:nucleus"/>
    <property type="evidence" value="ECO:0000266"/>
    <property type="project" value="RGD"/>
</dbReference>
<dbReference type="GO" id="GO:0000124">
    <property type="term" value="C:SAGA complex"/>
    <property type="evidence" value="ECO:0000266"/>
    <property type="project" value="RGD"/>
</dbReference>
<dbReference type="GO" id="GO:0070461">
    <property type="term" value="C:SAGA-type complex"/>
    <property type="evidence" value="ECO:0000318"/>
    <property type="project" value="GO_Central"/>
</dbReference>
<dbReference type="GO" id="GO:0003682">
    <property type="term" value="F:chromatin binding"/>
    <property type="evidence" value="ECO:0000318"/>
    <property type="project" value="GO_Central"/>
</dbReference>
<dbReference type="GO" id="GO:0003677">
    <property type="term" value="F:DNA binding"/>
    <property type="evidence" value="ECO:0007669"/>
    <property type="project" value="UniProtKB-KW"/>
</dbReference>
<dbReference type="GO" id="GO:0003713">
    <property type="term" value="F:transcription coactivator activity"/>
    <property type="evidence" value="ECO:0000318"/>
    <property type="project" value="GO_Central"/>
</dbReference>
<dbReference type="GO" id="GO:0008270">
    <property type="term" value="F:zinc ion binding"/>
    <property type="evidence" value="ECO:0007669"/>
    <property type="project" value="UniProtKB-KW"/>
</dbReference>
<dbReference type="GO" id="GO:0006325">
    <property type="term" value="P:chromatin organization"/>
    <property type="evidence" value="ECO:0000266"/>
    <property type="project" value="RGD"/>
</dbReference>
<dbReference type="GO" id="GO:0006338">
    <property type="term" value="P:chromatin remodeling"/>
    <property type="evidence" value="ECO:0000318"/>
    <property type="project" value="GO_Central"/>
</dbReference>
<dbReference type="GO" id="GO:0000278">
    <property type="term" value="P:mitotic cell cycle"/>
    <property type="evidence" value="ECO:0000266"/>
    <property type="project" value="RGD"/>
</dbReference>
<dbReference type="GO" id="GO:0051726">
    <property type="term" value="P:regulation of cell cycle"/>
    <property type="evidence" value="ECO:0000266"/>
    <property type="project" value="RGD"/>
</dbReference>
<dbReference type="GO" id="GO:0051302">
    <property type="term" value="P:regulation of cell division"/>
    <property type="evidence" value="ECO:0000266"/>
    <property type="project" value="RGD"/>
</dbReference>
<dbReference type="GO" id="GO:0006355">
    <property type="term" value="P:regulation of DNA-templated transcription"/>
    <property type="evidence" value="ECO:0000266"/>
    <property type="project" value="RGD"/>
</dbReference>
<dbReference type="GO" id="GO:0045995">
    <property type="term" value="P:regulation of embryonic development"/>
    <property type="evidence" value="ECO:0000266"/>
    <property type="project" value="RGD"/>
</dbReference>
<dbReference type="GO" id="GO:0031647">
    <property type="term" value="P:regulation of protein stability"/>
    <property type="evidence" value="ECO:0000266"/>
    <property type="project" value="RGD"/>
</dbReference>
<dbReference type="GO" id="GO:0006357">
    <property type="term" value="P:regulation of transcription by RNA polymerase II"/>
    <property type="evidence" value="ECO:0000266"/>
    <property type="project" value="RGD"/>
</dbReference>
<dbReference type="CDD" id="cd00167">
    <property type="entry name" value="SANT"/>
    <property type="match status" value="1"/>
</dbReference>
<dbReference type="CDD" id="cd02335">
    <property type="entry name" value="ZZ_ADA2"/>
    <property type="match status" value="1"/>
</dbReference>
<dbReference type="FunFam" id="1.10.10.60:FF:000110">
    <property type="entry name" value="Transcriptional adapter"/>
    <property type="match status" value="1"/>
</dbReference>
<dbReference type="FunFam" id="3.30.60.90:FF:000020">
    <property type="entry name" value="Transcriptional adapter"/>
    <property type="match status" value="1"/>
</dbReference>
<dbReference type="FunFam" id="1.10.10.10:FF:000087">
    <property type="entry name" value="Transcriptional adapter 2"/>
    <property type="match status" value="1"/>
</dbReference>
<dbReference type="Gene3D" id="3.30.60.90">
    <property type="match status" value="1"/>
</dbReference>
<dbReference type="Gene3D" id="1.10.10.60">
    <property type="entry name" value="Homeodomain-like"/>
    <property type="match status" value="1"/>
</dbReference>
<dbReference type="Gene3D" id="1.10.10.10">
    <property type="entry name" value="Winged helix-like DNA-binding domain superfamily/Winged helix DNA-binding domain"/>
    <property type="match status" value="1"/>
</dbReference>
<dbReference type="InterPro" id="IPR041983">
    <property type="entry name" value="ADA2-like_ZZ"/>
</dbReference>
<dbReference type="InterPro" id="IPR016827">
    <property type="entry name" value="Ada2/TADA2"/>
</dbReference>
<dbReference type="InterPro" id="IPR009057">
    <property type="entry name" value="Homeodomain-like_sf"/>
</dbReference>
<dbReference type="InterPro" id="IPR017930">
    <property type="entry name" value="Myb_dom"/>
</dbReference>
<dbReference type="InterPro" id="IPR001005">
    <property type="entry name" value="SANT/Myb"/>
</dbReference>
<dbReference type="InterPro" id="IPR017884">
    <property type="entry name" value="SANT_dom"/>
</dbReference>
<dbReference type="InterPro" id="IPR007526">
    <property type="entry name" value="SWIRM"/>
</dbReference>
<dbReference type="InterPro" id="IPR055141">
    <property type="entry name" value="TADA2A_B-like_dom"/>
</dbReference>
<dbReference type="InterPro" id="IPR036388">
    <property type="entry name" value="WH-like_DNA-bd_sf"/>
</dbReference>
<dbReference type="InterPro" id="IPR000433">
    <property type="entry name" value="Znf_ZZ"/>
</dbReference>
<dbReference type="InterPro" id="IPR043145">
    <property type="entry name" value="Znf_ZZ_sf"/>
</dbReference>
<dbReference type="PANTHER" id="PTHR12374:SF20">
    <property type="entry name" value="TRANSCRIPTIONAL ADAPTER 2-ALPHA"/>
    <property type="match status" value="1"/>
</dbReference>
<dbReference type="PANTHER" id="PTHR12374">
    <property type="entry name" value="TRANSCRIPTIONAL ADAPTOR 2 ADA2 -RELATED"/>
    <property type="match status" value="1"/>
</dbReference>
<dbReference type="Pfam" id="PF00249">
    <property type="entry name" value="Myb_DNA-binding"/>
    <property type="match status" value="1"/>
</dbReference>
<dbReference type="Pfam" id="PF04433">
    <property type="entry name" value="SWIRM"/>
    <property type="match status" value="1"/>
</dbReference>
<dbReference type="Pfam" id="PF22941">
    <property type="entry name" value="TADA2A-like_3rd"/>
    <property type="match status" value="1"/>
</dbReference>
<dbReference type="Pfam" id="PF25299">
    <property type="entry name" value="ZZ_ADA2"/>
    <property type="match status" value="1"/>
</dbReference>
<dbReference type="PIRSF" id="PIRSF025024">
    <property type="entry name" value="Transcriptional_adaptor_2"/>
    <property type="match status" value="1"/>
</dbReference>
<dbReference type="SMART" id="SM00717">
    <property type="entry name" value="SANT"/>
    <property type="match status" value="1"/>
</dbReference>
<dbReference type="SUPFAM" id="SSF46689">
    <property type="entry name" value="Homeodomain-like"/>
    <property type="match status" value="2"/>
</dbReference>
<dbReference type="SUPFAM" id="SSF57850">
    <property type="entry name" value="RING/U-box"/>
    <property type="match status" value="1"/>
</dbReference>
<dbReference type="PROSITE" id="PS51293">
    <property type="entry name" value="SANT"/>
    <property type="match status" value="1"/>
</dbReference>
<dbReference type="PROSITE" id="PS50934">
    <property type="entry name" value="SWIRM"/>
    <property type="match status" value="1"/>
</dbReference>
<dbReference type="PROSITE" id="PS50135">
    <property type="entry name" value="ZF_ZZ_2"/>
    <property type="match status" value="1"/>
</dbReference>
<sequence>MDRLGSFSNDPSDKPPCRGCSSYLMEPYIKCAECGPPPFFLCLQCFTRGFEYKKHQSDHTYEIMTSDFPVLDPSWTAQEEMALLEAVMDCGFGNWQDVANQMCTKTKEECEKHYMKHFINNPLFASTLLNLKQAEAAKTADTAIPFHSADDPPRPAFDSLLSRDMAGYMPARADFIEEFDNYAEWDLRDIDFVEDDSDILHALKMAVVDIYHSRLKERQRRKKIIRDHGLVNLRKFRLMERRYPKEVQDLYETMRRFARIVGPVEHDKFIESHALEFELRREIKRLQEYRTAGITNFCSARTYDHLKKTREEERLKRTMLSEVLQYIQDSSACQQWLRRQADIDSGLSPSVLMASNSGRRSAPPLNLTGLPGTEKLNEKEKELCQVVRLVPGAYLEYKSALLNECHKQGGLRLAQARALIKIDVNKTRKIYDFLIREGYITKA</sequence>
<comment type="function">
    <text evidence="2 3">Component of the ATAC complex, a complex with histone acetyltransferase activity on histones H3 and H4. Required for the function of some acidic activation domains, which activate transcription from a distant site. Binds double-stranded DNA. Binds dinucleosomes, probably at the linker region between neighboring nucleosomes. Plays a role in chromatin remodeling. May promote TP53/p53 'Lys-321' acetylation, leading to reduced TP53 stability and transcriptional activity. May also promote XRCC6 acetylation thus facilitating cell apoptosis in response to DNA damage.</text>
</comment>
<comment type="subunit">
    <text evidence="2">Interacts with GCN5 and NR3C1. Associated with the P/CAF protein in the PCAF complex. Component of the PCAF complex, at least composed of TADA2L/ADA2, TADA3L/ADA3, TAF5L/PAF65-beta, TAF6L/PAF65-alpha, TAF10/TAFII30, TAF12/TAFII20, TAF9/TAFII31 and TRRAP. Component of the ADA2A-containing complex (ATAC), composed of KAT14, KAT2A, TADA2L, TADA3L, ZZ3, MBIP, WDR5, YEATS2, CCDC101 and DR1. Interacts with CCDC134.</text>
</comment>
<comment type="subcellular location">
    <subcellularLocation>
        <location evidence="6">Nucleus</location>
    </subcellularLocation>
    <subcellularLocation>
        <location evidence="3">Chromosome</location>
    </subcellularLocation>
</comment>
<accession>Q6AYE3</accession>
<accession>A1EC76</accession>
<name>TAD2A_RAT</name>
<feature type="chain" id="PRO_0000240670" description="Transcriptional adapter 2-alpha">
    <location>
        <begin position="1"/>
        <end position="443"/>
    </location>
</feature>
<feature type="domain" description="SANT" evidence="6">
    <location>
        <begin position="70"/>
        <end position="122"/>
    </location>
</feature>
<feature type="domain" description="SWIRM" evidence="5">
    <location>
        <begin position="356"/>
        <end position="443"/>
    </location>
</feature>
<feature type="zinc finger region" description="ZZ-type" evidence="4">
    <location>
        <begin position="12"/>
        <end position="69"/>
    </location>
</feature>
<feature type="DNA-binding region" evidence="1">
    <location>
        <begin position="426"/>
        <end position="435"/>
    </location>
</feature>
<feature type="binding site" evidence="4">
    <location>
        <position position="17"/>
    </location>
    <ligand>
        <name>Zn(2+)</name>
        <dbReference type="ChEBI" id="CHEBI:29105"/>
        <label>1</label>
    </ligand>
</feature>
<feature type="binding site" evidence="4">
    <location>
        <position position="20"/>
    </location>
    <ligand>
        <name>Zn(2+)</name>
        <dbReference type="ChEBI" id="CHEBI:29105"/>
        <label>1</label>
    </ligand>
</feature>
<feature type="binding site" evidence="4">
    <location>
        <position position="31"/>
    </location>
    <ligand>
        <name>Zn(2+)</name>
        <dbReference type="ChEBI" id="CHEBI:29105"/>
        <label>2</label>
    </ligand>
</feature>
<feature type="binding site" evidence="4">
    <location>
        <position position="34"/>
    </location>
    <ligand>
        <name>Zn(2+)</name>
        <dbReference type="ChEBI" id="CHEBI:29105"/>
        <label>2</label>
    </ligand>
</feature>
<feature type="binding site" evidence="4">
    <location>
        <position position="42"/>
    </location>
    <ligand>
        <name>Zn(2+)</name>
        <dbReference type="ChEBI" id="CHEBI:29105"/>
        <label>1</label>
    </ligand>
</feature>
<feature type="binding site" evidence="4">
    <location>
        <position position="45"/>
    </location>
    <ligand>
        <name>Zn(2+)</name>
        <dbReference type="ChEBI" id="CHEBI:29105"/>
        <label>1</label>
    </ligand>
</feature>
<feature type="binding site" evidence="4">
    <location>
        <position position="55"/>
    </location>
    <ligand>
        <name>Zn(2+)</name>
        <dbReference type="ChEBI" id="CHEBI:29105"/>
        <label>2</label>
    </ligand>
</feature>
<feature type="binding site" evidence="4">
    <location>
        <position position="59"/>
    </location>
    <ligand>
        <name>Zn(2+)</name>
        <dbReference type="ChEBI" id="CHEBI:29105"/>
        <label>2</label>
    </ligand>
</feature>
<feature type="modified residue" description="Phosphoserine" evidence="2">
    <location>
        <position position="6"/>
    </location>
</feature>
<feature type="cross-link" description="Glycyl lysine isopeptide (Lys-Gly) (interchain with G-Cter in SUMO2)" evidence="2">
    <location>
        <position position="132"/>
    </location>
</feature>
<feature type="cross-link" description="Glycyl lysine isopeptide (Lys-Gly) (interchain with G-Cter in SUMO2)" evidence="2">
    <location>
        <position position="138"/>
    </location>
</feature>
<proteinExistence type="evidence at transcript level"/>
<reference key="1">
    <citation type="journal article" date="2007" name="Genomics">
        <title>Fine-mapping and comprehensive transcript analysis reveals nonsynonymous variants within a novel 1.17 Mb blood pressure QTL region on rat chromosome 10.</title>
        <authorList>
            <person name="Saad Y."/>
            <person name="Garrett M.R."/>
            <person name="Manickavasagam E."/>
            <person name="Yerga-Woolwine S."/>
            <person name="Farms P."/>
            <person name="Radecki T."/>
            <person name="Joe B."/>
        </authorList>
    </citation>
    <scope>NUCLEOTIDE SEQUENCE [MRNA]</scope>
    <source>
        <strain>Dahl salt-sensitive</strain>
        <strain>Lewis</strain>
    </source>
</reference>
<reference key="2">
    <citation type="journal article" date="2004" name="Genome Res.">
        <title>The status, quality, and expansion of the NIH full-length cDNA project: the Mammalian Gene Collection (MGC).</title>
        <authorList>
            <consortium name="The MGC Project Team"/>
        </authorList>
    </citation>
    <scope>NUCLEOTIDE SEQUENCE [LARGE SCALE MRNA]</scope>
    <source>
        <tissue>Lung</tissue>
    </source>
</reference>
<organism>
    <name type="scientific">Rattus norvegicus</name>
    <name type="common">Rat</name>
    <dbReference type="NCBI Taxonomy" id="10116"/>
    <lineage>
        <taxon>Eukaryota</taxon>
        <taxon>Metazoa</taxon>
        <taxon>Chordata</taxon>
        <taxon>Craniata</taxon>
        <taxon>Vertebrata</taxon>
        <taxon>Euteleostomi</taxon>
        <taxon>Mammalia</taxon>
        <taxon>Eutheria</taxon>
        <taxon>Euarchontoglires</taxon>
        <taxon>Glires</taxon>
        <taxon>Rodentia</taxon>
        <taxon>Myomorpha</taxon>
        <taxon>Muroidea</taxon>
        <taxon>Muridae</taxon>
        <taxon>Murinae</taxon>
        <taxon>Rattus</taxon>
    </lineage>
</organism>
<evidence type="ECO:0000250" key="1"/>
<evidence type="ECO:0000250" key="2">
    <source>
        <dbReference type="UniProtKB" id="O75478"/>
    </source>
</evidence>
<evidence type="ECO:0000250" key="3">
    <source>
        <dbReference type="UniProtKB" id="Q8CHV6"/>
    </source>
</evidence>
<evidence type="ECO:0000255" key="4">
    <source>
        <dbReference type="PROSITE-ProRule" id="PRU00228"/>
    </source>
</evidence>
<evidence type="ECO:0000255" key="5">
    <source>
        <dbReference type="PROSITE-ProRule" id="PRU00247"/>
    </source>
</evidence>
<evidence type="ECO:0000255" key="6">
    <source>
        <dbReference type="PROSITE-ProRule" id="PRU00624"/>
    </source>
</evidence>
<gene>
    <name type="primary">Tada2a</name>
    <name type="synonym">Tada2l</name>
</gene>
<protein>
    <recommendedName>
        <fullName>Transcriptional adapter 2-alpha</fullName>
    </recommendedName>
    <alternativeName>
        <fullName>Transcriptional adapter 2-like</fullName>
        <shortName>ADA2-like protein</shortName>
    </alternativeName>
</protein>
<keyword id="KW-0158">Chromosome</keyword>
<keyword id="KW-0238">DNA-binding</keyword>
<keyword id="KW-1017">Isopeptide bond</keyword>
<keyword id="KW-0479">Metal-binding</keyword>
<keyword id="KW-0539">Nucleus</keyword>
<keyword id="KW-0597">Phosphoprotein</keyword>
<keyword id="KW-1185">Reference proteome</keyword>
<keyword id="KW-0804">Transcription</keyword>
<keyword id="KW-0805">Transcription regulation</keyword>
<keyword id="KW-0832">Ubl conjugation</keyword>
<keyword id="KW-0862">Zinc</keyword>
<keyword id="KW-0863">Zinc-finger</keyword>